<comment type="function">
    <text evidence="1">Part of a heterotetrameric complex that catalyzes the two-step biosynthesis of anthranilate, an intermediate in the biosynthesis of L-tryptophan. In the first step, the glutamine-binding beta subunit (TrpG) of anthranilate synthase (AS) provides the glutamine amidotransferase activity which generates ammonia as a substrate that, along with chorismate, is used in the second step, catalyzed by the large alpha subunit of AS (TrpE) to produce anthranilate. In the absence of TrpG, TrpE can synthesize anthranilate directly from chorismate and high concentrations of ammonia (By similarity).</text>
</comment>
<comment type="catalytic activity">
    <reaction>
        <text>chorismate + L-glutamine = anthranilate + pyruvate + L-glutamate + H(+)</text>
        <dbReference type="Rhea" id="RHEA:21732"/>
        <dbReference type="ChEBI" id="CHEBI:15361"/>
        <dbReference type="ChEBI" id="CHEBI:15378"/>
        <dbReference type="ChEBI" id="CHEBI:16567"/>
        <dbReference type="ChEBI" id="CHEBI:29748"/>
        <dbReference type="ChEBI" id="CHEBI:29985"/>
        <dbReference type="ChEBI" id="CHEBI:58359"/>
        <dbReference type="EC" id="4.1.3.27"/>
    </reaction>
</comment>
<comment type="cofactor">
    <cofactor evidence="2">
        <name>Mg(2+)</name>
        <dbReference type="ChEBI" id="CHEBI:18420"/>
    </cofactor>
    <text evidence="2">Binds 1 Mg(2+) ion per subunit.</text>
</comment>
<comment type="activity regulation">
    <text evidence="1">Feedback inhibited by tryptophan.</text>
</comment>
<comment type="pathway">
    <text>Amino-acid biosynthesis; L-tryptophan biosynthesis; L-tryptophan from chorismate: step 1/5.</text>
</comment>
<comment type="subunit">
    <text evidence="1">Heterotetramer consisting of two non-identical subunits: a beta subunit (TrpG) and a large alpha subunit (TrpE).</text>
</comment>
<comment type="similarity">
    <text evidence="4">Belongs to the anthranilate synthase component I family.</text>
</comment>
<feature type="chain" id="PRO_0000154075" description="Anthranilate synthase component 1">
    <location>
        <begin position="1"/>
        <end position="531"/>
    </location>
</feature>
<feature type="region of interest" description="Disordered" evidence="3">
    <location>
        <begin position="506"/>
        <end position="531"/>
    </location>
</feature>
<feature type="compositionally biased region" description="Low complexity" evidence="3">
    <location>
        <begin position="511"/>
        <end position="531"/>
    </location>
</feature>
<feature type="binding site" evidence="2">
    <location>
        <position position="56"/>
    </location>
    <ligand>
        <name>L-tryptophan</name>
        <dbReference type="ChEBI" id="CHEBI:57912"/>
    </ligand>
</feature>
<feature type="binding site" evidence="2">
    <location>
        <begin position="284"/>
        <end position="286"/>
    </location>
    <ligand>
        <name>L-tryptophan</name>
        <dbReference type="ChEBI" id="CHEBI:57912"/>
    </ligand>
</feature>
<feature type="binding site" evidence="2">
    <location>
        <begin position="324"/>
        <end position="325"/>
    </location>
    <ligand>
        <name>chorismate</name>
        <dbReference type="ChEBI" id="CHEBI:29748"/>
    </ligand>
</feature>
<feature type="binding site" evidence="2">
    <location>
        <position position="351"/>
    </location>
    <ligand>
        <name>Mg(2+)</name>
        <dbReference type="ChEBI" id="CHEBI:18420"/>
    </ligand>
</feature>
<feature type="binding site" evidence="2">
    <location>
        <position position="439"/>
    </location>
    <ligand>
        <name>chorismate</name>
        <dbReference type="ChEBI" id="CHEBI:29748"/>
    </ligand>
</feature>
<feature type="binding site" evidence="2">
    <location>
        <position position="459"/>
    </location>
    <ligand>
        <name>chorismate</name>
        <dbReference type="ChEBI" id="CHEBI:29748"/>
    </ligand>
</feature>
<feature type="binding site" evidence="2">
    <location>
        <begin position="473"/>
        <end position="475"/>
    </location>
    <ligand>
        <name>chorismate</name>
        <dbReference type="ChEBI" id="CHEBI:29748"/>
    </ligand>
</feature>
<feature type="binding site" evidence="2">
    <location>
        <position position="475"/>
    </location>
    <ligand>
        <name>chorismate</name>
        <dbReference type="ChEBI" id="CHEBI:29748"/>
    </ligand>
</feature>
<feature type="binding site" evidence="2">
    <location>
        <position position="488"/>
    </location>
    <ligand>
        <name>Mg(2+)</name>
        <dbReference type="ChEBI" id="CHEBI:18420"/>
    </ligand>
</feature>
<evidence type="ECO:0000250" key="1"/>
<evidence type="ECO:0000250" key="2">
    <source>
        <dbReference type="UniProtKB" id="P00897"/>
    </source>
</evidence>
<evidence type="ECO:0000256" key="3">
    <source>
        <dbReference type="SAM" id="MobiDB-lite"/>
    </source>
</evidence>
<evidence type="ECO:0000305" key="4"/>
<protein>
    <recommendedName>
        <fullName>Anthranilate synthase component 1</fullName>
        <shortName>AS</shortName>
        <shortName>ASI</shortName>
        <ecNumber>4.1.3.27</ecNumber>
    </recommendedName>
</protein>
<name>TRPE_ARTGO</name>
<proteinExistence type="inferred from homology"/>
<gene>
    <name type="primary">trpE</name>
</gene>
<sequence>MQDLGIISPGLEEFRELAAHSRVIPVRLKVLADAETPIGLYRKLAQGQPGTFLMESAAVGGAWSRYSFIGSRSRATLTTKDGQAHWLGEPPAGVPVDGNPVDAIRDTIEALRTDRFDGLPPFTSGLVGFLGWETVRHWEKLTRPPEDDLQLPELALNLVTDMAVHDNMDGTVLLIANAINFDNSSERVDEAWHDAVARVKELLARISTPVLQPVSVLEPAALDFAASVQERWNEPEYLAALDRGKEAIVDGEVFQVVISRRFEMECGASPLDVYRVLRNTNPSPYMYIFSLEDAAGRQYSIVGSSPEALVTVTGEDVITHPIAGSRPRGKTVDADKALAEELLADQKERAEHLMLVDLSRNDLSKVCVAGSVDVTQFMEVERFSHIMHLVSTVVGRLAPTAKAYDVLKATFPAGTLSGAPKPRALRLLDELEPHRRGIYGGVVGYLDFAGDMDMAIAIRSALLREGRAYVQAGGGIVADSSNPAEAQETVNKAAAPLRAVHTAGSLHNITPDSVSAPDSVSSPDSVTEANS</sequence>
<accession>P96556</accession>
<reference key="1">
    <citation type="submission" date="1997-03" db="EMBL/GenBank/DDBJ databases">
        <authorList>
            <person name="Chernova T."/>
            <person name="Viswanathan V.K."/>
            <person name="Austria N."/>
            <person name="Nichols B.P."/>
        </authorList>
    </citation>
    <scope>NUCLEOTIDE SEQUENCE [GENOMIC DNA]</scope>
    <source>
        <strain>ATCC 8010 / DSM 20124 / BCRC 10598 / JCM 1332 / KCTC 9101 / NBRC 12137 / NCIMB 8907 / NRRL B-2979 / 168</strain>
    </source>
</reference>
<dbReference type="EC" id="4.1.3.27"/>
<dbReference type="EMBL" id="U89690">
    <property type="protein sequence ID" value="AAB49479.1"/>
    <property type="molecule type" value="Genomic_DNA"/>
</dbReference>
<dbReference type="SMR" id="P96556"/>
<dbReference type="UniPathway" id="UPA00035">
    <property type="reaction ID" value="UER00040"/>
</dbReference>
<dbReference type="GO" id="GO:0004049">
    <property type="term" value="F:anthranilate synthase activity"/>
    <property type="evidence" value="ECO:0007669"/>
    <property type="project" value="UniProtKB-EC"/>
</dbReference>
<dbReference type="GO" id="GO:0046872">
    <property type="term" value="F:metal ion binding"/>
    <property type="evidence" value="ECO:0007669"/>
    <property type="project" value="UniProtKB-KW"/>
</dbReference>
<dbReference type="GO" id="GO:0000162">
    <property type="term" value="P:L-tryptophan biosynthetic process"/>
    <property type="evidence" value="ECO:0007669"/>
    <property type="project" value="UniProtKB-UniPathway"/>
</dbReference>
<dbReference type="Gene3D" id="3.60.120.10">
    <property type="entry name" value="Anthranilate synthase"/>
    <property type="match status" value="1"/>
</dbReference>
<dbReference type="InterPro" id="IPR005801">
    <property type="entry name" value="ADC_synthase"/>
</dbReference>
<dbReference type="InterPro" id="IPR019999">
    <property type="entry name" value="Anth_synth_I-like"/>
</dbReference>
<dbReference type="InterPro" id="IPR006805">
    <property type="entry name" value="Anth_synth_I_N"/>
</dbReference>
<dbReference type="InterPro" id="IPR005256">
    <property type="entry name" value="Anth_synth_I_PabB"/>
</dbReference>
<dbReference type="InterPro" id="IPR015890">
    <property type="entry name" value="Chorismate_C"/>
</dbReference>
<dbReference type="NCBIfam" id="NF010086">
    <property type="entry name" value="PRK13571.1"/>
    <property type="match status" value="1"/>
</dbReference>
<dbReference type="NCBIfam" id="TIGR00564">
    <property type="entry name" value="trpE_most"/>
    <property type="match status" value="1"/>
</dbReference>
<dbReference type="PANTHER" id="PTHR11236">
    <property type="entry name" value="AMINOBENZOATE/ANTHRANILATE SYNTHASE"/>
    <property type="match status" value="1"/>
</dbReference>
<dbReference type="PANTHER" id="PTHR11236:SF46">
    <property type="entry name" value="ANTHRANILATE SYNTHASE COMPONENT 1"/>
    <property type="match status" value="1"/>
</dbReference>
<dbReference type="Pfam" id="PF04715">
    <property type="entry name" value="Anth_synt_I_N"/>
    <property type="match status" value="1"/>
</dbReference>
<dbReference type="Pfam" id="PF00425">
    <property type="entry name" value="Chorismate_bind"/>
    <property type="match status" value="1"/>
</dbReference>
<dbReference type="PRINTS" id="PR00095">
    <property type="entry name" value="ANTSNTHASEI"/>
</dbReference>
<dbReference type="SUPFAM" id="SSF56322">
    <property type="entry name" value="ADC synthase"/>
    <property type="match status" value="1"/>
</dbReference>
<organism>
    <name type="scientific">Arthrobacter globiformis</name>
    <dbReference type="NCBI Taxonomy" id="1665"/>
    <lineage>
        <taxon>Bacteria</taxon>
        <taxon>Bacillati</taxon>
        <taxon>Actinomycetota</taxon>
        <taxon>Actinomycetes</taxon>
        <taxon>Micrococcales</taxon>
        <taxon>Micrococcaceae</taxon>
        <taxon>Arthrobacter</taxon>
    </lineage>
</organism>
<keyword id="KW-0028">Amino-acid biosynthesis</keyword>
<keyword id="KW-0057">Aromatic amino acid biosynthesis</keyword>
<keyword id="KW-0456">Lyase</keyword>
<keyword id="KW-0460">Magnesium</keyword>
<keyword id="KW-0479">Metal-binding</keyword>
<keyword id="KW-0822">Tryptophan biosynthesis</keyword>